<dbReference type="EMBL" id="CP001598">
    <property type="protein sequence ID" value="ACQ49077.1"/>
    <property type="molecule type" value="Genomic_DNA"/>
</dbReference>
<dbReference type="RefSeq" id="WP_003158405.1">
    <property type="nucleotide sequence ID" value="NC_012659.1"/>
</dbReference>
<dbReference type="GeneID" id="45020929"/>
<dbReference type="KEGG" id="bai:BAA_0968"/>
<dbReference type="HOGENOM" id="CLU_042384_0_0_9"/>
<dbReference type="GO" id="GO:0005886">
    <property type="term" value="C:plasma membrane"/>
    <property type="evidence" value="ECO:0007669"/>
    <property type="project" value="UniProtKB-SubCell"/>
</dbReference>
<dbReference type="InterPro" id="IPR007383">
    <property type="entry name" value="DUF445"/>
</dbReference>
<dbReference type="InterPro" id="IPR016991">
    <property type="entry name" value="UCP032178"/>
</dbReference>
<dbReference type="PANTHER" id="PTHR35791">
    <property type="entry name" value="UPF0754 MEMBRANE PROTEIN YHEB"/>
    <property type="match status" value="1"/>
</dbReference>
<dbReference type="PANTHER" id="PTHR35791:SF1">
    <property type="entry name" value="UPF0754 MEMBRANE PROTEIN YHEB"/>
    <property type="match status" value="1"/>
</dbReference>
<dbReference type="Pfam" id="PF04286">
    <property type="entry name" value="DUF445"/>
    <property type="match status" value="1"/>
</dbReference>
<dbReference type="PIRSF" id="PIRSF032178">
    <property type="entry name" value="UCP032178"/>
    <property type="match status" value="1"/>
</dbReference>
<evidence type="ECO:0000250" key="1"/>
<evidence type="ECO:0000255" key="2"/>
<evidence type="ECO:0000305" key="3"/>
<organism>
    <name type="scientific">Bacillus anthracis (strain A0248)</name>
    <dbReference type="NCBI Taxonomy" id="592021"/>
    <lineage>
        <taxon>Bacteria</taxon>
        <taxon>Bacillati</taxon>
        <taxon>Bacillota</taxon>
        <taxon>Bacilli</taxon>
        <taxon>Bacillales</taxon>
        <taxon>Bacillaceae</taxon>
        <taxon>Bacillus</taxon>
        <taxon>Bacillus cereus group</taxon>
    </lineage>
</organism>
<comment type="subcellular location">
    <subcellularLocation>
        <location evidence="1">Cell membrane</location>
        <topology evidence="1">Multi-pass membrane protein</topology>
    </subcellularLocation>
</comment>
<comment type="similarity">
    <text evidence="3">Belongs to the UPF0754 family.</text>
</comment>
<feature type="chain" id="PRO_0000388266" description="UPF0754 membrane protein BAA_0968">
    <location>
        <begin position="1"/>
        <end position="378"/>
    </location>
</feature>
<feature type="transmembrane region" description="Helical" evidence="2">
    <location>
        <begin position="1"/>
        <end position="21"/>
    </location>
</feature>
<feature type="transmembrane region" description="Helical" evidence="2">
    <location>
        <begin position="357"/>
        <end position="377"/>
    </location>
</feature>
<sequence length="378" mass="42831">MNIWLSMLTTTGLGAIIGGFTNHLAIKMLFRPHRPMYIGKFQVPFTPGLIPKRRDELAVQLGKMVVEHLLTPEGIGKKLTNEEFQKGLIHWAQVEVDKVITNEQSLRHMLGKWDVAHVEKEATEKIEQVITEKIQAFLEEYYTYTWEQALPHSVHEKIENAIPNVSAFILKRAIHFFESEEGKSRLSRMIDDFFASRGALLNLVGMFLGNVSVVDRVQPEVIKFLGQDGTKQLLTDVLQKEWEKLKGRDVKELETFVEKEMIVSSILSAVKVEETVSKFLNQSVQQVCEPVRETIIEKVVPNAVTKGLKWGGENVESILNNLHLAEIVQQEVSTFSTERLEDLVLSITKNELKMITYLGALLGGMIGIVQGLLLLFLK</sequence>
<protein>
    <recommendedName>
        <fullName>UPF0754 membrane protein BAA_0968</fullName>
    </recommendedName>
</protein>
<proteinExistence type="inferred from homology"/>
<reference key="1">
    <citation type="submission" date="2009-04" db="EMBL/GenBank/DDBJ databases">
        <title>Genome sequence of Bacillus anthracis A0248.</title>
        <authorList>
            <person name="Dodson R.J."/>
            <person name="Munk A.C."/>
            <person name="Bruce D."/>
            <person name="Detter C."/>
            <person name="Tapia R."/>
            <person name="Sutton G."/>
            <person name="Sims D."/>
            <person name="Brettin T."/>
        </authorList>
    </citation>
    <scope>NUCLEOTIDE SEQUENCE [LARGE SCALE GENOMIC DNA]</scope>
    <source>
        <strain>A0248</strain>
    </source>
</reference>
<gene>
    <name type="ordered locus">BAA_0968</name>
</gene>
<name>Y968_BACAA</name>
<keyword id="KW-1003">Cell membrane</keyword>
<keyword id="KW-0472">Membrane</keyword>
<keyword id="KW-0812">Transmembrane</keyword>
<keyword id="KW-1133">Transmembrane helix</keyword>
<accession>C3P1N2</accession>